<sequence>MKKVTGQIKLQLPAGKANPAPPVGPALGQHGVNIMEFCKQFNAATQAQAKEALIIPVIITVYQDRSFTFVLKTPPAAILLKKAAGLHTEKKKGSGAHKPGKEKVGQVTRKQVEQIAKTKMQDMTAGTLEAAMRTVEGTALSMGIEIVG</sequence>
<organism>
    <name type="scientific">Anaeromyxobacter dehalogenans (strain 2CP-C)</name>
    <dbReference type="NCBI Taxonomy" id="290397"/>
    <lineage>
        <taxon>Bacteria</taxon>
        <taxon>Pseudomonadati</taxon>
        <taxon>Myxococcota</taxon>
        <taxon>Myxococcia</taxon>
        <taxon>Myxococcales</taxon>
        <taxon>Cystobacterineae</taxon>
        <taxon>Anaeromyxobacteraceae</taxon>
        <taxon>Anaeromyxobacter</taxon>
    </lineage>
</organism>
<gene>
    <name evidence="1" type="primary">rplK</name>
    <name type="ordered locus">Adeh_1588</name>
</gene>
<protein>
    <recommendedName>
        <fullName evidence="1">Large ribosomal subunit protein uL11</fullName>
    </recommendedName>
    <alternativeName>
        <fullName evidence="3">50S ribosomal protein L11</fullName>
    </alternativeName>
</protein>
<reference key="1">
    <citation type="submission" date="2006-01" db="EMBL/GenBank/DDBJ databases">
        <title>Complete sequence of Anaeromyxobacter dehalogenans 2CP-C.</title>
        <authorList>
            <person name="Copeland A."/>
            <person name="Lucas S."/>
            <person name="Lapidus A."/>
            <person name="Barry K."/>
            <person name="Detter J.C."/>
            <person name="Glavina T."/>
            <person name="Hammon N."/>
            <person name="Israni S."/>
            <person name="Pitluck S."/>
            <person name="Brettin T."/>
            <person name="Bruce D."/>
            <person name="Han C."/>
            <person name="Tapia R."/>
            <person name="Gilna P."/>
            <person name="Kiss H."/>
            <person name="Schmutz J."/>
            <person name="Larimer F."/>
            <person name="Land M."/>
            <person name="Kyrpides N."/>
            <person name="Anderson I."/>
            <person name="Sanford R.A."/>
            <person name="Ritalahti K.M."/>
            <person name="Thomas H.S."/>
            <person name="Kirby J.R."/>
            <person name="Zhulin I.B."/>
            <person name="Loeffler F.E."/>
            <person name="Richardson P."/>
        </authorList>
    </citation>
    <scope>NUCLEOTIDE SEQUENCE [LARGE SCALE GENOMIC DNA]</scope>
    <source>
        <strain>2CP-C</strain>
    </source>
</reference>
<comment type="function">
    <text evidence="1">Forms part of the ribosomal stalk which helps the ribosome interact with GTP-bound translation factors.</text>
</comment>
<comment type="subunit">
    <text evidence="1">Part of the ribosomal stalk of the 50S ribosomal subunit. Interacts with L10 and the large rRNA to form the base of the stalk. L10 forms an elongated spine to which L12 dimers bind in a sequential fashion forming a multimeric L10(L12)X complex.</text>
</comment>
<comment type="PTM">
    <text evidence="1">One or more lysine residues are methylated.</text>
</comment>
<comment type="similarity">
    <text evidence="1">Belongs to the universal ribosomal protein uL11 family.</text>
</comment>
<keyword id="KW-0488">Methylation</keyword>
<keyword id="KW-1185">Reference proteome</keyword>
<keyword id="KW-0687">Ribonucleoprotein</keyword>
<keyword id="KW-0689">Ribosomal protein</keyword>
<keyword id="KW-0694">RNA-binding</keyword>
<keyword id="KW-0699">rRNA-binding</keyword>
<name>RL11_ANADE</name>
<feature type="chain" id="PRO_1000046136" description="Large ribosomal subunit protein uL11">
    <location>
        <begin position="1"/>
        <end position="148"/>
    </location>
</feature>
<feature type="region of interest" description="Disordered" evidence="2">
    <location>
        <begin position="89"/>
        <end position="108"/>
    </location>
</feature>
<evidence type="ECO:0000255" key="1">
    <source>
        <dbReference type="HAMAP-Rule" id="MF_00736"/>
    </source>
</evidence>
<evidence type="ECO:0000256" key="2">
    <source>
        <dbReference type="SAM" id="MobiDB-lite"/>
    </source>
</evidence>
<evidence type="ECO:0000305" key="3"/>
<dbReference type="EMBL" id="CP000251">
    <property type="protein sequence ID" value="ABC81361.1"/>
    <property type="molecule type" value="Genomic_DNA"/>
</dbReference>
<dbReference type="RefSeq" id="WP_011420644.1">
    <property type="nucleotide sequence ID" value="NC_007760.1"/>
</dbReference>
<dbReference type="SMR" id="Q2II82"/>
<dbReference type="STRING" id="290397.Adeh_1588"/>
<dbReference type="KEGG" id="ade:Adeh_1588"/>
<dbReference type="eggNOG" id="COG0080">
    <property type="taxonomic scope" value="Bacteria"/>
</dbReference>
<dbReference type="HOGENOM" id="CLU_074237_2_0_7"/>
<dbReference type="OrthoDB" id="9802408at2"/>
<dbReference type="Proteomes" id="UP000001935">
    <property type="component" value="Chromosome"/>
</dbReference>
<dbReference type="GO" id="GO:0022625">
    <property type="term" value="C:cytosolic large ribosomal subunit"/>
    <property type="evidence" value="ECO:0007669"/>
    <property type="project" value="TreeGrafter"/>
</dbReference>
<dbReference type="GO" id="GO:0070180">
    <property type="term" value="F:large ribosomal subunit rRNA binding"/>
    <property type="evidence" value="ECO:0007669"/>
    <property type="project" value="UniProtKB-UniRule"/>
</dbReference>
<dbReference type="GO" id="GO:0003735">
    <property type="term" value="F:structural constituent of ribosome"/>
    <property type="evidence" value="ECO:0007669"/>
    <property type="project" value="InterPro"/>
</dbReference>
<dbReference type="GO" id="GO:0006412">
    <property type="term" value="P:translation"/>
    <property type="evidence" value="ECO:0007669"/>
    <property type="project" value="UniProtKB-UniRule"/>
</dbReference>
<dbReference type="CDD" id="cd00349">
    <property type="entry name" value="Ribosomal_L11"/>
    <property type="match status" value="1"/>
</dbReference>
<dbReference type="FunFam" id="1.10.10.250:FF:000001">
    <property type="entry name" value="50S ribosomal protein L11"/>
    <property type="match status" value="1"/>
</dbReference>
<dbReference type="FunFam" id="3.30.1550.10:FF:000001">
    <property type="entry name" value="50S ribosomal protein L11"/>
    <property type="match status" value="1"/>
</dbReference>
<dbReference type="Gene3D" id="1.10.10.250">
    <property type="entry name" value="Ribosomal protein L11, C-terminal domain"/>
    <property type="match status" value="1"/>
</dbReference>
<dbReference type="Gene3D" id="3.30.1550.10">
    <property type="entry name" value="Ribosomal protein L11/L12, N-terminal domain"/>
    <property type="match status" value="1"/>
</dbReference>
<dbReference type="HAMAP" id="MF_00736">
    <property type="entry name" value="Ribosomal_uL11"/>
    <property type="match status" value="1"/>
</dbReference>
<dbReference type="InterPro" id="IPR000911">
    <property type="entry name" value="Ribosomal_uL11"/>
</dbReference>
<dbReference type="InterPro" id="IPR006519">
    <property type="entry name" value="Ribosomal_uL11_bac-typ"/>
</dbReference>
<dbReference type="InterPro" id="IPR020783">
    <property type="entry name" value="Ribosomal_uL11_C"/>
</dbReference>
<dbReference type="InterPro" id="IPR036769">
    <property type="entry name" value="Ribosomal_uL11_C_sf"/>
</dbReference>
<dbReference type="InterPro" id="IPR020785">
    <property type="entry name" value="Ribosomal_uL11_CS"/>
</dbReference>
<dbReference type="InterPro" id="IPR020784">
    <property type="entry name" value="Ribosomal_uL11_N"/>
</dbReference>
<dbReference type="InterPro" id="IPR036796">
    <property type="entry name" value="Ribosomal_uL11_N_sf"/>
</dbReference>
<dbReference type="NCBIfam" id="TIGR01632">
    <property type="entry name" value="L11_bact"/>
    <property type="match status" value="1"/>
</dbReference>
<dbReference type="PANTHER" id="PTHR11661">
    <property type="entry name" value="60S RIBOSOMAL PROTEIN L12"/>
    <property type="match status" value="1"/>
</dbReference>
<dbReference type="PANTHER" id="PTHR11661:SF1">
    <property type="entry name" value="LARGE RIBOSOMAL SUBUNIT PROTEIN UL11M"/>
    <property type="match status" value="1"/>
</dbReference>
<dbReference type="Pfam" id="PF00298">
    <property type="entry name" value="Ribosomal_L11"/>
    <property type="match status" value="1"/>
</dbReference>
<dbReference type="Pfam" id="PF03946">
    <property type="entry name" value="Ribosomal_L11_N"/>
    <property type="match status" value="1"/>
</dbReference>
<dbReference type="SMART" id="SM00649">
    <property type="entry name" value="RL11"/>
    <property type="match status" value="1"/>
</dbReference>
<dbReference type="SUPFAM" id="SSF54747">
    <property type="entry name" value="Ribosomal L11/L12e N-terminal domain"/>
    <property type="match status" value="1"/>
</dbReference>
<dbReference type="SUPFAM" id="SSF46906">
    <property type="entry name" value="Ribosomal protein L11, C-terminal domain"/>
    <property type="match status" value="1"/>
</dbReference>
<dbReference type="PROSITE" id="PS00359">
    <property type="entry name" value="RIBOSOMAL_L11"/>
    <property type="match status" value="1"/>
</dbReference>
<proteinExistence type="inferred from homology"/>
<accession>Q2II82</accession>